<gene>
    <name type="primary">NOP58</name>
    <name type="ORF">PICST_72477</name>
</gene>
<organism>
    <name type="scientific">Scheffersomyces stipitis (strain ATCC 58785 / CBS 6054 / NBRC 10063 / NRRL Y-11545)</name>
    <name type="common">Yeast</name>
    <name type="synonym">Pichia stipitis</name>
    <dbReference type="NCBI Taxonomy" id="322104"/>
    <lineage>
        <taxon>Eukaryota</taxon>
        <taxon>Fungi</taxon>
        <taxon>Dikarya</taxon>
        <taxon>Ascomycota</taxon>
        <taxon>Saccharomycotina</taxon>
        <taxon>Pichiomycetes</taxon>
        <taxon>Debaryomycetaceae</taxon>
        <taxon>Scheffersomyces</taxon>
    </lineage>
</organism>
<keyword id="KW-0539">Nucleus</keyword>
<keyword id="KW-1185">Reference proteome</keyword>
<keyword id="KW-0687">Ribonucleoprotein</keyword>
<keyword id="KW-0690">Ribosome biogenesis</keyword>
<keyword id="KW-0698">rRNA processing</keyword>
<proteinExistence type="inferred from homology"/>
<dbReference type="EMBL" id="CP000499">
    <property type="protein sequence ID" value="ABN66645.1"/>
    <property type="molecule type" value="Genomic_DNA"/>
</dbReference>
<dbReference type="RefSeq" id="XP_001384674.1">
    <property type="nucleotide sequence ID" value="XM_001384637.1"/>
</dbReference>
<dbReference type="SMR" id="A3LUT0"/>
<dbReference type="FunCoup" id="A3LUT0">
    <property type="interactions" value="1682"/>
</dbReference>
<dbReference type="STRING" id="322104.A3LUT0"/>
<dbReference type="GeneID" id="4839579"/>
<dbReference type="KEGG" id="pic:PICST_72477"/>
<dbReference type="eggNOG" id="KOG2572">
    <property type="taxonomic scope" value="Eukaryota"/>
</dbReference>
<dbReference type="HOGENOM" id="CLU_015495_5_2_1"/>
<dbReference type="InParanoid" id="A3LUT0"/>
<dbReference type="OMA" id="MGMRSNW"/>
<dbReference type="OrthoDB" id="6780543at2759"/>
<dbReference type="Proteomes" id="UP000002258">
    <property type="component" value="Chromosome 5"/>
</dbReference>
<dbReference type="GO" id="GO:0031428">
    <property type="term" value="C:box C/D methylation guide snoRNP complex"/>
    <property type="evidence" value="ECO:0007669"/>
    <property type="project" value="EnsemblFungi"/>
</dbReference>
<dbReference type="GO" id="GO:0005730">
    <property type="term" value="C:nucleolus"/>
    <property type="evidence" value="ECO:0007669"/>
    <property type="project" value="UniProtKB-SubCell"/>
</dbReference>
<dbReference type="GO" id="GO:0032040">
    <property type="term" value="C:small-subunit processome"/>
    <property type="evidence" value="ECO:0007669"/>
    <property type="project" value="EnsemblFungi"/>
</dbReference>
<dbReference type="GO" id="GO:0030515">
    <property type="term" value="F:snoRNA binding"/>
    <property type="evidence" value="ECO:0007669"/>
    <property type="project" value="InterPro"/>
</dbReference>
<dbReference type="GO" id="GO:0017069">
    <property type="term" value="F:snRNA binding"/>
    <property type="evidence" value="ECO:0007669"/>
    <property type="project" value="EnsemblFungi"/>
</dbReference>
<dbReference type="GO" id="GO:0000494">
    <property type="term" value="P:box C/D sno(s)RNA 3'-end processing"/>
    <property type="evidence" value="ECO:0007669"/>
    <property type="project" value="EnsemblFungi"/>
</dbReference>
<dbReference type="GO" id="GO:0000480">
    <property type="term" value="P:endonucleolytic cleavage in 5'-ETS of tricistronic rRNA transcript (SSU-rRNA, 5.8S rRNA, LSU-rRNA)"/>
    <property type="evidence" value="ECO:0007669"/>
    <property type="project" value="EnsemblFungi"/>
</dbReference>
<dbReference type="GO" id="GO:0000447">
    <property type="term" value="P:endonucleolytic cleavage in ITS1 to separate SSU-rRNA from 5.8S rRNA and LSU-rRNA from tricistronic rRNA transcript (SSU-rRNA, 5.8S rRNA, LSU-rRNA)"/>
    <property type="evidence" value="ECO:0007669"/>
    <property type="project" value="EnsemblFungi"/>
</dbReference>
<dbReference type="GO" id="GO:0000472">
    <property type="term" value="P:endonucleolytic cleavage to generate mature 5'-end of SSU-rRNA from (SSU-rRNA, 5.8S rRNA, LSU-rRNA)"/>
    <property type="evidence" value="ECO:0007669"/>
    <property type="project" value="EnsemblFungi"/>
</dbReference>
<dbReference type="GO" id="GO:1902570">
    <property type="term" value="P:protein localization to nucleolus"/>
    <property type="evidence" value="ECO:0007669"/>
    <property type="project" value="EnsemblFungi"/>
</dbReference>
<dbReference type="GO" id="GO:0000452">
    <property type="term" value="P:snoRNA guided rRNA 2'-O-methylation"/>
    <property type="evidence" value="ECO:0007669"/>
    <property type="project" value="EnsemblFungi"/>
</dbReference>
<dbReference type="FunFam" id="1.10.246.90:FF:000003">
    <property type="entry name" value="Nucleolar protein 58"/>
    <property type="match status" value="1"/>
</dbReference>
<dbReference type="FunFam" id="1.10.287.4070:FF:000001">
    <property type="entry name" value="Probable Nucleolar protein 58"/>
    <property type="match status" value="1"/>
</dbReference>
<dbReference type="Gene3D" id="1.10.287.4070">
    <property type="match status" value="1"/>
</dbReference>
<dbReference type="Gene3D" id="1.10.246.90">
    <property type="entry name" value="Nop domain"/>
    <property type="match status" value="1"/>
</dbReference>
<dbReference type="InterPro" id="IPR045056">
    <property type="entry name" value="Nop56/Nop58"/>
</dbReference>
<dbReference type="InterPro" id="IPR012974">
    <property type="entry name" value="NOP58/56_N"/>
</dbReference>
<dbReference type="InterPro" id="IPR042239">
    <property type="entry name" value="Nop_C"/>
</dbReference>
<dbReference type="InterPro" id="IPR002687">
    <property type="entry name" value="Nop_dom"/>
</dbReference>
<dbReference type="InterPro" id="IPR036070">
    <property type="entry name" value="Nop_dom_sf"/>
</dbReference>
<dbReference type="InterPro" id="IPR012976">
    <property type="entry name" value="NOSIC"/>
</dbReference>
<dbReference type="PANTHER" id="PTHR10894">
    <property type="entry name" value="NUCLEOLAR PROTEIN 5 NUCLEOLAR PROTEIN NOP5 NOP58"/>
    <property type="match status" value="1"/>
</dbReference>
<dbReference type="PANTHER" id="PTHR10894:SF1">
    <property type="entry name" value="NUCLEOLAR PROTEIN 58"/>
    <property type="match status" value="1"/>
</dbReference>
<dbReference type="Pfam" id="PF01798">
    <property type="entry name" value="Nop"/>
    <property type="match status" value="1"/>
</dbReference>
<dbReference type="Pfam" id="PF08156">
    <property type="entry name" value="NOP5NT"/>
    <property type="match status" value="1"/>
</dbReference>
<dbReference type="SMART" id="SM00931">
    <property type="entry name" value="NOSIC"/>
    <property type="match status" value="1"/>
</dbReference>
<dbReference type="SUPFAM" id="SSF89124">
    <property type="entry name" value="Nop domain"/>
    <property type="match status" value="1"/>
</dbReference>
<dbReference type="PROSITE" id="PS51358">
    <property type="entry name" value="NOP"/>
    <property type="match status" value="1"/>
</dbReference>
<evidence type="ECO:0000250" key="1"/>
<evidence type="ECO:0000255" key="2">
    <source>
        <dbReference type="PROSITE-ProRule" id="PRU00690"/>
    </source>
</evidence>
<evidence type="ECO:0000256" key="3">
    <source>
        <dbReference type="SAM" id="MobiDB-lite"/>
    </source>
</evidence>
<evidence type="ECO:0000305" key="4"/>
<sequence length="515" mass="57281">MAYVLTETAAGYALLKASDKKIHKSSSLIEDLNTADKVAEQFKIHRFEKFQSAANALEEANAVIEGRVSDSLKKMLEDAKSDKKATLIVSEAKLGNAINKLGLNFSVVSDAASLDLHRAIREFLPELLPGLDDSMLKQMSLGLAHSIGRHKLKFSADKVDTMIVQAIALLDDLDKELNTYAMRCKEWYGWHFPELAKMIVDSVAYARIILTMGVRSNASETDLSEILPEELEEQVKSAAEVSMGTEITAIDLENIRALAEQIVDFAAYREQLSNYLSSRMKAIAPNLTALVGELVGARLIAHAGSLTSLAKAPASTIQILGAEKALFRALKTKHDTPKYGLLYHASLVGQASGKNKGKIARVLAAKAAVALRYDSLAEERDDSGDFGLEVRAKVESRLSALEGRDLRTTSKVVREQPKVDITEARAYNADADAPTAEVDSDDESDTEEIDTKKEKKEKKEKKEKKDKKRKREDDDEEEEDKKSKKEKKEKKEKKEKKEKKEKKDKKDKKSKKEKK</sequence>
<protein>
    <recommendedName>
        <fullName>Nucleolar protein 58</fullName>
    </recommendedName>
</protein>
<accession>A3LUT0</accession>
<comment type="function">
    <text evidence="1">Required for pre-18S rRNA processing. May bind microtubules (By similarity).</text>
</comment>
<comment type="subcellular location">
    <subcellularLocation>
        <location evidence="1">Nucleus</location>
        <location evidence="1">Nucleolus</location>
    </subcellularLocation>
</comment>
<comment type="similarity">
    <text evidence="4">Belongs to the NOP5/NOP56 family.</text>
</comment>
<reference key="1">
    <citation type="journal article" date="2007" name="Nat. Biotechnol.">
        <title>Genome sequence of the lignocellulose-bioconverting and xylose-fermenting yeast Pichia stipitis.</title>
        <authorList>
            <person name="Jeffries T.W."/>
            <person name="Grigoriev I.V."/>
            <person name="Grimwood J."/>
            <person name="Laplaza J.M."/>
            <person name="Aerts A."/>
            <person name="Salamov A."/>
            <person name="Schmutz J."/>
            <person name="Lindquist E."/>
            <person name="Dehal P."/>
            <person name="Shapiro H."/>
            <person name="Jin Y.-S."/>
            <person name="Passoth V."/>
            <person name="Richardson P.M."/>
        </authorList>
    </citation>
    <scope>NUCLEOTIDE SEQUENCE [LARGE SCALE GENOMIC DNA]</scope>
    <source>
        <strain>ATCC 58785 / CBS 6054 / NBRC 10063 / NRRL Y-11545</strain>
    </source>
</reference>
<name>NOP58_PICST</name>
<feature type="chain" id="PRO_0000350990" description="Nucleolar protein 58">
    <location>
        <begin position="1"/>
        <end position="515"/>
    </location>
</feature>
<feature type="domain" description="Nop" evidence="2">
    <location>
        <begin position="283"/>
        <end position="403"/>
    </location>
</feature>
<feature type="region of interest" description="Disordered" evidence="3">
    <location>
        <begin position="423"/>
        <end position="515"/>
    </location>
</feature>
<feature type="compositionally biased region" description="Acidic residues" evidence="3">
    <location>
        <begin position="438"/>
        <end position="448"/>
    </location>
</feature>
<feature type="compositionally biased region" description="Basic residues" evidence="3">
    <location>
        <begin position="455"/>
        <end position="470"/>
    </location>
</feature>
<feature type="compositionally biased region" description="Basic residues" evidence="3">
    <location>
        <begin position="484"/>
        <end position="515"/>
    </location>
</feature>